<gene>
    <name type="primary">Raver1</name>
    <name type="synonym">Raver1h</name>
</gene>
<dbReference type="EMBL" id="BC083865">
    <property type="protein sequence ID" value="AAH83865.1"/>
    <property type="molecule type" value="mRNA"/>
</dbReference>
<dbReference type="RefSeq" id="NP_001013961.1">
    <property type="nucleotide sequence ID" value="NM_001013939.1"/>
</dbReference>
<dbReference type="SMR" id="Q5XI28"/>
<dbReference type="FunCoup" id="Q5XI28">
    <property type="interactions" value="1801"/>
</dbReference>
<dbReference type="IntAct" id="Q5XI28">
    <property type="interactions" value="4"/>
</dbReference>
<dbReference type="STRING" id="10116.ENSRNOP00000048510"/>
<dbReference type="GlyGen" id="Q5XI28">
    <property type="glycosylation" value="1 site"/>
</dbReference>
<dbReference type="iPTMnet" id="Q5XI28"/>
<dbReference type="PhosphoSitePlus" id="Q5XI28"/>
<dbReference type="jPOST" id="Q5XI28"/>
<dbReference type="PaxDb" id="10116-ENSRNOP00000048510"/>
<dbReference type="Ensembl" id="ENSRNOT00000046983.4">
    <property type="protein sequence ID" value="ENSRNOP00000048510.3"/>
    <property type="gene ID" value="ENSRNOG00000020710.7"/>
</dbReference>
<dbReference type="GeneID" id="298705"/>
<dbReference type="KEGG" id="rno:298705"/>
<dbReference type="UCSC" id="RGD:1359190">
    <property type="organism name" value="rat"/>
</dbReference>
<dbReference type="AGR" id="RGD:1359190"/>
<dbReference type="CTD" id="125950"/>
<dbReference type="RGD" id="1359190">
    <property type="gene designation" value="Raver1"/>
</dbReference>
<dbReference type="eggNOG" id="KOG0123">
    <property type="taxonomic scope" value="Eukaryota"/>
</dbReference>
<dbReference type="GeneTree" id="ENSGT00940000160550"/>
<dbReference type="HOGENOM" id="CLU_016492_1_0_1"/>
<dbReference type="InParanoid" id="Q5XI28"/>
<dbReference type="OMA" id="KENFMAG"/>
<dbReference type="OrthoDB" id="639027at2759"/>
<dbReference type="PhylomeDB" id="Q5XI28"/>
<dbReference type="TreeFam" id="TF331660"/>
<dbReference type="PRO" id="PR:Q5XI28"/>
<dbReference type="Proteomes" id="UP000002494">
    <property type="component" value="Chromosome 8"/>
</dbReference>
<dbReference type="Bgee" id="ENSRNOG00000020710">
    <property type="expression patterns" value="Expressed in thymus and 19 other cell types or tissues"/>
</dbReference>
<dbReference type="GO" id="GO:0005737">
    <property type="term" value="C:cytoplasm"/>
    <property type="evidence" value="ECO:0007669"/>
    <property type="project" value="UniProtKB-SubCell"/>
</dbReference>
<dbReference type="GO" id="GO:0005634">
    <property type="term" value="C:nucleus"/>
    <property type="evidence" value="ECO:0007669"/>
    <property type="project" value="UniProtKB-SubCell"/>
</dbReference>
<dbReference type="GO" id="GO:0003723">
    <property type="term" value="F:RNA binding"/>
    <property type="evidence" value="ECO:0000318"/>
    <property type="project" value="GO_Central"/>
</dbReference>
<dbReference type="CDD" id="cd12663">
    <property type="entry name" value="RRM1_RAVER1"/>
    <property type="match status" value="1"/>
</dbReference>
<dbReference type="CDD" id="cd12665">
    <property type="entry name" value="RRM2_RAVER1"/>
    <property type="match status" value="1"/>
</dbReference>
<dbReference type="CDD" id="cd12667">
    <property type="entry name" value="RRM3_RAVER1"/>
    <property type="match status" value="1"/>
</dbReference>
<dbReference type="FunFam" id="3.30.70.330:FF:000100">
    <property type="entry name" value="Putative ribonucleoprotein PTB-binding 1"/>
    <property type="match status" value="1"/>
</dbReference>
<dbReference type="FunFam" id="3.30.70.330:FF:000116">
    <property type="entry name" value="Putative ribonucleoprotein PTB-binding 1"/>
    <property type="match status" value="1"/>
</dbReference>
<dbReference type="FunFam" id="3.30.70.330:FF:000125">
    <property type="entry name" value="Putative ribonucleoprotein PTB-binding 1"/>
    <property type="match status" value="1"/>
</dbReference>
<dbReference type="Gene3D" id="3.30.70.330">
    <property type="match status" value="3"/>
</dbReference>
<dbReference type="InterPro" id="IPR050502">
    <property type="entry name" value="Euk_RNA-bind_prot"/>
</dbReference>
<dbReference type="InterPro" id="IPR012677">
    <property type="entry name" value="Nucleotide-bd_a/b_plait_sf"/>
</dbReference>
<dbReference type="InterPro" id="IPR034633">
    <property type="entry name" value="RAVER1_RRM1"/>
</dbReference>
<dbReference type="InterPro" id="IPR034635">
    <property type="entry name" value="RAVER1_RRM3"/>
</dbReference>
<dbReference type="InterPro" id="IPR035979">
    <property type="entry name" value="RBD_domain_sf"/>
</dbReference>
<dbReference type="InterPro" id="IPR000504">
    <property type="entry name" value="RRM_dom"/>
</dbReference>
<dbReference type="PANTHER" id="PTHR48025">
    <property type="entry name" value="OS02G0815200 PROTEIN"/>
    <property type="match status" value="1"/>
</dbReference>
<dbReference type="PANTHER" id="PTHR48025:SF1">
    <property type="entry name" value="RRM DOMAIN-CONTAINING PROTEIN"/>
    <property type="match status" value="1"/>
</dbReference>
<dbReference type="Pfam" id="PF00076">
    <property type="entry name" value="RRM_1"/>
    <property type="match status" value="3"/>
</dbReference>
<dbReference type="SMART" id="SM00360">
    <property type="entry name" value="RRM"/>
    <property type="match status" value="3"/>
</dbReference>
<dbReference type="SUPFAM" id="SSF54928">
    <property type="entry name" value="RNA-binding domain, RBD"/>
    <property type="match status" value="2"/>
</dbReference>
<dbReference type="PROSITE" id="PS50102">
    <property type="entry name" value="RRM"/>
    <property type="match status" value="3"/>
</dbReference>
<evidence type="ECO:0000250" key="1"/>
<evidence type="ECO:0000250" key="2">
    <source>
        <dbReference type="UniProtKB" id="Q8IY67"/>
    </source>
</evidence>
<evidence type="ECO:0000250" key="3">
    <source>
        <dbReference type="UniProtKB" id="Q9CW46"/>
    </source>
</evidence>
<evidence type="ECO:0000255" key="4"/>
<evidence type="ECO:0000255" key="5">
    <source>
        <dbReference type="PROSITE-ProRule" id="PRU00176"/>
    </source>
</evidence>
<evidence type="ECO:0000256" key="6">
    <source>
        <dbReference type="SAM" id="MobiDB-lite"/>
    </source>
</evidence>
<evidence type="ECO:0000269" key="7">
    <source>
    </source>
</evidence>
<evidence type="ECO:0007744" key="8">
    <source>
    </source>
</evidence>
<keyword id="KW-0007">Acetylation</keyword>
<keyword id="KW-0963">Cytoplasm</keyword>
<keyword id="KW-0539">Nucleus</keyword>
<keyword id="KW-0597">Phosphoprotein</keyword>
<keyword id="KW-1185">Reference proteome</keyword>
<keyword id="KW-0677">Repeat</keyword>
<keyword id="KW-0694">RNA-binding</keyword>
<feature type="initiator methionine" description="Removed" evidence="2">
    <location>
        <position position="1"/>
    </location>
</feature>
<feature type="chain" id="PRO_0000081489" description="Ribonucleoprotein PTB-binding 1">
    <location>
        <begin position="2"/>
        <end position="748"/>
    </location>
</feature>
<feature type="domain" description="RRM 1" evidence="5">
    <location>
        <begin position="59"/>
        <end position="130"/>
    </location>
</feature>
<feature type="domain" description="RRM 2" evidence="5">
    <location>
        <begin position="132"/>
        <end position="210"/>
    </location>
</feature>
<feature type="domain" description="RRM 3" evidence="5">
    <location>
        <begin position="221"/>
        <end position="299"/>
    </location>
</feature>
<feature type="region of interest" description="Disordered" evidence="6">
    <location>
        <begin position="1"/>
        <end position="42"/>
    </location>
</feature>
<feature type="region of interest" description="Interaction with PTBP1" evidence="1">
    <location>
        <begin position="307"/>
        <end position="401"/>
    </location>
</feature>
<feature type="region of interest" description="Disordered" evidence="6">
    <location>
        <begin position="390"/>
        <end position="505"/>
    </location>
</feature>
<feature type="region of interest" description="Disordered" evidence="6">
    <location>
        <begin position="525"/>
        <end position="647"/>
    </location>
</feature>
<feature type="region of interest" description="Disordered" evidence="6">
    <location>
        <begin position="672"/>
        <end position="731"/>
    </location>
</feature>
<feature type="short sequence motif" description="Nuclear localization signal" evidence="4">
    <location>
        <begin position="45"/>
        <end position="60"/>
    </location>
</feature>
<feature type="short sequence motif" description="Nuclear localization signal" evidence="4">
    <location>
        <begin position="743"/>
        <end position="746"/>
    </location>
</feature>
<feature type="compositionally biased region" description="Low complexity" evidence="6">
    <location>
        <begin position="675"/>
        <end position="685"/>
    </location>
</feature>
<feature type="modified residue" description="N-acetylalanine" evidence="2">
    <location>
        <position position="2"/>
    </location>
</feature>
<feature type="modified residue" description="Phosphoserine" evidence="2">
    <location>
        <position position="6"/>
    </location>
</feature>
<feature type="modified residue" description="Phosphoserine" evidence="8">
    <location>
        <position position="14"/>
    </location>
</feature>
<feature type="modified residue" description="Phosphothreonine" evidence="8">
    <location>
        <position position="31"/>
    </location>
</feature>
<feature type="modified residue" description="Phosphothreonine" evidence="2">
    <location>
        <position position="469"/>
    </location>
</feature>
<feature type="modified residue" description="Phosphoserine" evidence="2">
    <location>
        <position position="480"/>
    </location>
</feature>
<feature type="modified residue" description="Phosphoserine" evidence="8">
    <location>
        <position position="576"/>
    </location>
</feature>
<feature type="modified residue" description="Phosphoserine" evidence="8">
    <location>
        <position position="626"/>
    </location>
</feature>
<feature type="modified residue" description="Phosphoserine" evidence="3">
    <location>
        <position position="630"/>
    </location>
</feature>
<feature type="modified residue" description="Phosphoserine" evidence="3">
    <location>
        <position position="716"/>
    </location>
</feature>
<feature type="modified residue" description="Phosphoserine" evidence="3">
    <location>
        <position position="720"/>
    </location>
</feature>
<reference key="1">
    <citation type="journal article" date="2004" name="Genome Res.">
        <title>The status, quality, and expansion of the NIH full-length cDNA project: the Mammalian Gene Collection (MGC).</title>
        <authorList>
            <consortium name="The MGC Project Team"/>
        </authorList>
    </citation>
    <scope>NUCLEOTIDE SEQUENCE [LARGE SCALE MRNA]</scope>
    <source>
        <tissue>Kidney</tissue>
    </source>
</reference>
<reference key="2">
    <citation type="journal article" date="2003" name="EMBO J.">
        <title>The PTB interacting protein raver1 regulates alpha-tropomyosin alternative splicing.</title>
        <authorList>
            <person name="Gromak N."/>
            <person name="Rideau A."/>
            <person name="Southby J."/>
            <person name="Scadden A.D.J."/>
            <person name="Gooding C."/>
            <person name="Huettelmaier S."/>
            <person name="Singer R.H."/>
            <person name="Smith C.W.J."/>
        </authorList>
    </citation>
    <scope>TISSUE SPECIFICITY</scope>
</reference>
<reference key="3">
    <citation type="journal article" date="2012" name="Nat. Commun.">
        <title>Quantitative maps of protein phosphorylation sites across 14 different rat organs and tissues.</title>
        <authorList>
            <person name="Lundby A."/>
            <person name="Secher A."/>
            <person name="Lage K."/>
            <person name="Nordsborg N.B."/>
            <person name="Dmytriyev A."/>
            <person name="Lundby C."/>
            <person name="Olsen J.V."/>
        </authorList>
    </citation>
    <scope>PHOSPHORYLATION [LARGE SCALE ANALYSIS] AT SER-14; THR-31; SER-576 AND SER-626</scope>
    <scope>IDENTIFICATION BY MASS SPECTROMETRY [LARGE SCALE ANALYSIS]</scope>
</reference>
<comment type="function">
    <text evidence="1">Cooperates with PTBP1 to modulate regulated alternative splicing events. Promotes exon skipping. Cooperates with PTBP1 to modulate switching between mutually exclusive exons during maturation of the TPM1 pre-mRNA (By similarity).</text>
</comment>
<comment type="subunit">
    <text evidence="1">Interacts with PTBP1, RAVER2, VCL and ACTN1. Part of a complex containing RAVER1, VCL and ACTN1 (By similarity).</text>
</comment>
<comment type="subcellular location">
    <subcellularLocation>
        <location evidence="1">Nucleus</location>
    </subcellularLocation>
    <subcellularLocation>
        <location evidence="1">Cytoplasm</location>
    </subcellularLocation>
    <text evidence="1">Nuclear, in perinucleolar structures. Shuttles between nucleus and cytoplasm. Cytoplasm, at focal contacts and cell-cell contacts. Associated with myotubes during muscle differentiation (By similarity).</text>
</comment>
<comment type="tissue specificity">
    <text evidence="7">Ubiquitous. Detected in aorta, brain, gut, heart, kidney, liver, spleen, uterus and skeletal muscle.</text>
</comment>
<name>RAVR1_RAT</name>
<accession>Q5XI28</accession>
<sequence>MAADVSVTHRPPLSPEAEAEAETPETVDRRTPEQELPPLDPEEIRKRLEHTERQFRNRRKILIRGLPGDVTNQEVHDLLSDYELKYCFVDKYKGTAFVTLLNGEQAEAAINTFHQSRLRERELSVQLQPTDALLCVANLPPSLTQAQFEELVRPFGSLERCFLVYSERTGHSKGYGFAEYMKKDSAARAKSDLLGKPLGPRTLYVHWTDAGQLTPALLHSRCLCVDHLPPGFNDVDALRQALSAVYTPTFCQLASGQDGQLKGFAVLEYETAEMAEAAQQRADGLALGGSHLRVSFCAPGPPGRSMLAALIAAQATALNRGKGLLPEPNILQLLNNLGPSASLQLLLNPLLHGGASGKQGLLGAPPAMPLLSGPALSTALLQLALQSQNQSQSQSQKKPGILGDSPLGTLQAGAQPSNSLLGELSAGGGLAPELPPRRGKPQPLLPPLLGPSGGDREPMGLGPPASQLTPPPAPMGLRGSSLRGLPKDSGPLPTPPGVSLLGEPPKDYRIPLNPYLNLHSLLPSSNLAGKETRGWGGSGRGRRPAEPPLPSPAVPGGGNASNNGSKAFPMKPRLLSPIASNRLPPEPGLPDSYSFDYPTDVGPRRLFSHPRESNLGAHGPSRHKMSPPPSSFSEPRSGGGSGGPLSHFYSGSPTSYFTSGLQAGLKQSHLNKAVGSSPMGSSEGLLGLGPGPNGHSHLLKTPLGGQKRSFSHLLPSPEPSPEGSYVGQHSQGLGGHYADSYLKRKRIF</sequence>
<protein>
    <recommendedName>
        <fullName>Ribonucleoprotein PTB-binding 1</fullName>
    </recommendedName>
    <alternativeName>
        <fullName>Protein raver-1</fullName>
    </alternativeName>
</protein>
<organism>
    <name type="scientific">Rattus norvegicus</name>
    <name type="common">Rat</name>
    <dbReference type="NCBI Taxonomy" id="10116"/>
    <lineage>
        <taxon>Eukaryota</taxon>
        <taxon>Metazoa</taxon>
        <taxon>Chordata</taxon>
        <taxon>Craniata</taxon>
        <taxon>Vertebrata</taxon>
        <taxon>Euteleostomi</taxon>
        <taxon>Mammalia</taxon>
        <taxon>Eutheria</taxon>
        <taxon>Euarchontoglires</taxon>
        <taxon>Glires</taxon>
        <taxon>Rodentia</taxon>
        <taxon>Myomorpha</taxon>
        <taxon>Muroidea</taxon>
        <taxon>Muridae</taxon>
        <taxon>Murinae</taxon>
        <taxon>Rattus</taxon>
    </lineage>
</organism>
<proteinExistence type="evidence at protein level"/>